<accession>A4IID4</accession>
<name>PI4KB_XENTR</name>
<gene>
    <name type="primary">pi4kb</name>
    <name type="synonym">pik4cb</name>
</gene>
<protein>
    <recommendedName>
        <fullName>Phosphatidylinositol 4-kinase beta</fullName>
        <shortName>PI4K-beta</shortName>
        <shortName>PI4Kbeta</shortName>
        <shortName>PtdIns 4-kinase beta</shortName>
        <ecNumber evidence="2">2.7.1.67</ecNumber>
    </recommendedName>
</protein>
<keyword id="KW-0067">ATP-binding</keyword>
<keyword id="KW-0256">Endoplasmic reticulum</keyword>
<keyword id="KW-0418">Kinase</keyword>
<keyword id="KW-0443">Lipid metabolism</keyword>
<keyword id="KW-0472">Membrane</keyword>
<keyword id="KW-0496">Mitochondrion</keyword>
<keyword id="KW-1000">Mitochondrion outer membrane</keyword>
<keyword id="KW-0547">Nucleotide-binding</keyword>
<keyword id="KW-1185">Reference proteome</keyword>
<keyword id="KW-0808">Transferase</keyword>
<reference key="1">
    <citation type="submission" date="2007-03" db="EMBL/GenBank/DDBJ databases">
        <authorList>
            <consortium name="NIH - Xenopus Gene Collection (XGC) project"/>
        </authorList>
    </citation>
    <scope>NUCLEOTIDE SEQUENCE [LARGE SCALE MRNA]</scope>
    <source>
        <tissue>Brain</tissue>
    </source>
</reference>
<organism>
    <name type="scientific">Xenopus tropicalis</name>
    <name type="common">Western clawed frog</name>
    <name type="synonym">Silurana tropicalis</name>
    <dbReference type="NCBI Taxonomy" id="8364"/>
    <lineage>
        <taxon>Eukaryota</taxon>
        <taxon>Metazoa</taxon>
        <taxon>Chordata</taxon>
        <taxon>Craniata</taxon>
        <taxon>Vertebrata</taxon>
        <taxon>Euteleostomi</taxon>
        <taxon>Amphibia</taxon>
        <taxon>Batrachia</taxon>
        <taxon>Anura</taxon>
        <taxon>Pipoidea</taxon>
        <taxon>Pipidae</taxon>
        <taxon>Xenopodinae</taxon>
        <taxon>Xenopus</taxon>
        <taxon>Silurana</taxon>
    </lineage>
</organism>
<feature type="chain" id="PRO_0000365171" description="Phosphatidylinositol 4-kinase beta">
    <location>
        <begin position="1"/>
        <end position="806"/>
    </location>
</feature>
<feature type="domain" description="PIK helical" evidence="4">
    <location>
        <begin position="55"/>
        <end position="247"/>
    </location>
</feature>
<feature type="domain" description="PI3K/PI4K catalytic" evidence="3">
    <location>
        <begin position="525"/>
        <end position="791"/>
    </location>
</feature>
<feature type="region of interest" description="Disordered" evidence="5">
    <location>
        <begin position="69"/>
        <end position="104"/>
    </location>
</feature>
<feature type="region of interest" description="Disordered" evidence="5">
    <location>
        <begin position="253"/>
        <end position="310"/>
    </location>
</feature>
<feature type="region of interest" description="G-loop" evidence="3">
    <location>
        <begin position="531"/>
        <end position="537"/>
    </location>
</feature>
<feature type="region of interest" description="Catalytic loop" evidence="3">
    <location>
        <begin position="658"/>
        <end position="666"/>
    </location>
</feature>
<feature type="region of interest" description="Activation loop" evidence="3">
    <location>
        <begin position="677"/>
        <end position="701"/>
    </location>
</feature>
<feature type="compositionally biased region" description="Polar residues" evidence="5">
    <location>
        <begin position="283"/>
        <end position="302"/>
    </location>
</feature>
<sequence length="806" mass="90709">MGDTMVEPVPAKLSDPTLVLRGNGGSPLCVITEGVGEAQMVIDPDVAEKACQDVLDKVKLIRGSSAESLDKIDGSDTGDGGSLANGDAGPRHSESCGPPVSASRITEEEESLIDINSVKSARRRQKNNSAKQSWLLRLFECKLFDVSMAISYLYNSKEPGVQAYIGNRLFCFRYEDVDFYLPQLLNMYIHMDEDVGDAIKPYVVHRCRQSINFSLQCAWLLGAYSSDMHISTQRHSRGTKLRKLILSDELKPAHKKREIPPLSLAPDTGLSPSKRTHQRSKSDATVSISLSSNLKRTSSNPKVENDDEPVRLAPEREFIKSLMAIGKRLATLPTKEQKTQRLISELSLLNHKLPARVWLPTAGFDHHVVRVPHTQAVVLNSKDKAPYLIYVEVLECENFETSLVPVRIPENRIRSTRSVENLPECGITHEQRASSFTTVPNYDNDDEAWSVDDIGELQVELPELHTNSCDNISQFSVDSITSQESKDPVFIAAGDIRRRLSEQLAHTPTTFRRDPEDPSAVALKEPWQEKVRRIREGSPYGHFPNWRLLSVIVKCGDDLRQELLAYQVLKQLQSIWESERVPLWIRPYKILVISADSGMIEPVVNAVSIHQVKKQSQLSLLDYFLQEHGSCTTEAFLTAQRNFVQSCAGYCLVCYLLQVKDRHNGNILLDAEGHIIHIDFGFILSSSPRNLGFETSAFKLTSEFVDVMGGLNGDMFNYYKMLMLQGLIAARKHMDRVVQIVEIMQQGSQLPCFHGSSTIRNLKERFHMNMTEEQLQVLVEQMVDGSMRSITTKLYDGFQYLTNGIM</sequence>
<comment type="function">
    <text evidence="2">Phosphorylates phosphatidylinositol (PI) in the first committed step in the production of the second messenger inositol-1,4,5,-trisphosphate (PIP). May play an important role in the inner ear development.</text>
</comment>
<comment type="catalytic activity">
    <reaction evidence="2">
        <text>a 1,2-diacyl-sn-glycero-3-phospho-(1D-myo-inositol) + ATP = a 1,2-diacyl-sn-glycero-3-phospho-(1D-myo-inositol 4-phosphate) + ADP + H(+)</text>
        <dbReference type="Rhea" id="RHEA:19877"/>
        <dbReference type="ChEBI" id="CHEBI:15378"/>
        <dbReference type="ChEBI" id="CHEBI:30616"/>
        <dbReference type="ChEBI" id="CHEBI:57880"/>
        <dbReference type="ChEBI" id="CHEBI:58178"/>
        <dbReference type="ChEBI" id="CHEBI:456216"/>
        <dbReference type="EC" id="2.7.1.67"/>
    </reaction>
    <physiologicalReaction direction="left-to-right" evidence="2">
        <dbReference type="Rhea" id="RHEA:19878"/>
    </physiologicalReaction>
</comment>
<comment type="cofactor">
    <cofactor evidence="2">
        <name>Mg(2+)</name>
        <dbReference type="ChEBI" id="CHEBI:18420"/>
    </cofactor>
    <cofactor evidence="2">
        <name>Mn(2+)</name>
        <dbReference type="ChEBI" id="CHEBI:29035"/>
    </cofactor>
</comment>
<comment type="subcellular location">
    <subcellularLocation>
        <location evidence="1">Endomembrane system</location>
    </subcellularLocation>
    <subcellularLocation>
        <location evidence="1">Mitochondrion outer membrane</location>
        <topology evidence="1">Peripheral membrane protein</topology>
    </subcellularLocation>
    <subcellularLocation>
        <location evidence="1">Rough endoplasmic reticulum membrane</location>
        <topology evidence="1">Peripheral membrane protein</topology>
    </subcellularLocation>
</comment>
<comment type="similarity">
    <text evidence="6">Belongs to the PI3/PI4-kinase family. Type III PI4K subfamily.</text>
</comment>
<dbReference type="EC" id="2.7.1.67" evidence="2"/>
<dbReference type="EMBL" id="BC135973">
    <property type="protein sequence ID" value="AAI35974.1"/>
    <property type="molecule type" value="mRNA"/>
</dbReference>
<dbReference type="RefSeq" id="NP_001096204.1">
    <property type="nucleotide sequence ID" value="NM_001102734.1"/>
</dbReference>
<dbReference type="SMR" id="A4IID4"/>
<dbReference type="FunCoup" id="A4IID4">
    <property type="interactions" value="3445"/>
</dbReference>
<dbReference type="DNASU" id="100124755"/>
<dbReference type="GeneID" id="100124755"/>
<dbReference type="KEGG" id="xtr:100124755"/>
<dbReference type="AGR" id="Xenbase:XB-GENE-997612"/>
<dbReference type="CTD" id="5298"/>
<dbReference type="Xenbase" id="XB-GENE-997612">
    <property type="gene designation" value="pi4kb"/>
</dbReference>
<dbReference type="InParanoid" id="A4IID4"/>
<dbReference type="OMA" id="HKLANCN"/>
<dbReference type="OrthoDB" id="10264149at2759"/>
<dbReference type="Reactome" id="R-XTR-1660514">
    <property type="pathway name" value="Synthesis of PIPs at the Golgi membrane"/>
</dbReference>
<dbReference type="Proteomes" id="UP000008143">
    <property type="component" value="Chromosome 8"/>
</dbReference>
<dbReference type="GO" id="GO:0005741">
    <property type="term" value="C:mitochondrial outer membrane"/>
    <property type="evidence" value="ECO:0007669"/>
    <property type="project" value="UniProtKB-SubCell"/>
</dbReference>
<dbReference type="GO" id="GO:0030867">
    <property type="term" value="C:rough endoplasmic reticulum membrane"/>
    <property type="evidence" value="ECO:0007669"/>
    <property type="project" value="UniProtKB-SubCell"/>
</dbReference>
<dbReference type="GO" id="GO:0004430">
    <property type="term" value="F:1-phosphatidylinositol 4-kinase activity"/>
    <property type="evidence" value="ECO:0000250"/>
    <property type="project" value="UniProtKB"/>
</dbReference>
<dbReference type="GO" id="GO:0005524">
    <property type="term" value="F:ATP binding"/>
    <property type="evidence" value="ECO:0007669"/>
    <property type="project" value="UniProtKB-KW"/>
</dbReference>
<dbReference type="GO" id="GO:0048839">
    <property type="term" value="P:inner ear development"/>
    <property type="evidence" value="ECO:0000250"/>
    <property type="project" value="UniProtKB"/>
</dbReference>
<dbReference type="GO" id="GO:0046854">
    <property type="term" value="P:phosphatidylinositol phosphate biosynthetic process"/>
    <property type="evidence" value="ECO:0007669"/>
    <property type="project" value="InterPro"/>
</dbReference>
<dbReference type="CDD" id="cd22246">
    <property type="entry name" value="PI4KB_NTD"/>
    <property type="match status" value="1"/>
</dbReference>
<dbReference type="CDD" id="cd05168">
    <property type="entry name" value="PI4Kc_III_beta"/>
    <property type="match status" value="1"/>
</dbReference>
<dbReference type="FunFam" id="3.30.1010.10:FF:000031">
    <property type="entry name" value="Phosphatidylinositol 4-kinase beta"/>
    <property type="match status" value="1"/>
</dbReference>
<dbReference type="FunFam" id="1.10.1070.11:FF:000004">
    <property type="entry name" value="Phosphatidylinositol 4-kinase, catalytic, beta"/>
    <property type="match status" value="1"/>
</dbReference>
<dbReference type="Gene3D" id="1.10.1070.11">
    <property type="entry name" value="Phosphatidylinositol 3-/4-kinase, catalytic domain"/>
    <property type="match status" value="1"/>
</dbReference>
<dbReference type="Gene3D" id="3.30.1010.10">
    <property type="entry name" value="Phosphatidylinositol 3-kinase Catalytic Subunit, Chain A, domain 4"/>
    <property type="match status" value="1"/>
</dbReference>
<dbReference type="InterPro" id="IPR011009">
    <property type="entry name" value="Kinase-like_dom_sf"/>
</dbReference>
<dbReference type="InterPro" id="IPR000403">
    <property type="entry name" value="PI3/4_kinase_cat_dom"/>
</dbReference>
<dbReference type="InterPro" id="IPR036940">
    <property type="entry name" value="PI3/4_kinase_cat_sf"/>
</dbReference>
<dbReference type="InterPro" id="IPR018936">
    <property type="entry name" value="PI3/4_kinase_CS"/>
</dbReference>
<dbReference type="InterPro" id="IPR001263">
    <property type="entry name" value="PI3K_accessory_dom"/>
</dbReference>
<dbReference type="InterPro" id="IPR049160">
    <property type="entry name" value="PI4KB-PIK1_PIK"/>
</dbReference>
<dbReference type="InterPro" id="IPR015433">
    <property type="entry name" value="PI_Kinase"/>
</dbReference>
<dbReference type="PANTHER" id="PTHR10048:SF22">
    <property type="entry name" value="PHOSPHATIDYLINOSITOL 4-KINASE BETA"/>
    <property type="match status" value="1"/>
</dbReference>
<dbReference type="PANTHER" id="PTHR10048">
    <property type="entry name" value="PHOSPHATIDYLINOSITOL KINASE"/>
    <property type="match status" value="1"/>
</dbReference>
<dbReference type="Pfam" id="PF00454">
    <property type="entry name" value="PI3_PI4_kinase"/>
    <property type="match status" value="1"/>
</dbReference>
<dbReference type="Pfam" id="PF21245">
    <property type="entry name" value="PI4KB-PIK1_PIK"/>
    <property type="match status" value="1"/>
</dbReference>
<dbReference type="SMART" id="SM00146">
    <property type="entry name" value="PI3Kc"/>
    <property type="match status" value="1"/>
</dbReference>
<dbReference type="SUPFAM" id="SSF56112">
    <property type="entry name" value="Protein kinase-like (PK-like)"/>
    <property type="match status" value="1"/>
</dbReference>
<dbReference type="PROSITE" id="PS00915">
    <property type="entry name" value="PI3_4_KINASE_1"/>
    <property type="match status" value="1"/>
</dbReference>
<dbReference type="PROSITE" id="PS00916">
    <property type="entry name" value="PI3_4_KINASE_2"/>
    <property type="match status" value="1"/>
</dbReference>
<dbReference type="PROSITE" id="PS50290">
    <property type="entry name" value="PI3_4_KINASE_3"/>
    <property type="match status" value="1"/>
</dbReference>
<dbReference type="PROSITE" id="PS51545">
    <property type="entry name" value="PIK_HELICAL"/>
    <property type="match status" value="1"/>
</dbReference>
<proteinExistence type="evidence at transcript level"/>
<evidence type="ECO:0000250" key="1"/>
<evidence type="ECO:0000250" key="2">
    <source>
        <dbReference type="UniProtKB" id="Q9UBF8"/>
    </source>
</evidence>
<evidence type="ECO:0000255" key="3">
    <source>
        <dbReference type="PROSITE-ProRule" id="PRU00269"/>
    </source>
</evidence>
<evidence type="ECO:0000255" key="4">
    <source>
        <dbReference type="PROSITE-ProRule" id="PRU00878"/>
    </source>
</evidence>
<evidence type="ECO:0000256" key="5">
    <source>
        <dbReference type="SAM" id="MobiDB-lite"/>
    </source>
</evidence>
<evidence type="ECO:0000305" key="6"/>